<evidence type="ECO:0000255" key="1">
    <source>
        <dbReference type="HAMAP-Rule" id="MF_00248"/>
    </source>
</evidence>
<reference key="1">
    <citation type="journal article" date="2006" name="Proc. Natl. Acad. Sci. U.S.A.">
        <title>The complete genome sequence of a chronic atrophic gastritis Helicobacter pylori strain: evolution during disease progression.</title>
        <authorList>
            <person name="Oh J.D."/>
            <person name="Kling-Baeckhed H."/>
            <person name="Giannakis M."/>
            <person name="Xu J."/>
            <person name="Fulton R.S."/>
            <person name="Fulton L.A."/>
            <person name="Cordum H.S."/>
            <person name="Wang C."/>
            <person name="Elliott G."/>
            <person name="Edwards J."/>
            <person name="Mardis E.R."/>
            <person name="Engstrand L.G."/>
            <person name="Gordon J.I."/>
        </authorList>
    </citation>
    <scope>NUCLEOTIDE SEQUENCE [LARGE SCALE GENOMIC DNA]</scope>
    <source>
        <strain>HPAG1</strain>
    </source>
</reference>
<gene>
    <name evidence="1" type="primary">hslV</name>
    <name type="ordered locus">HPAG1_0489</name>
</gene>
<organism>
    <name type="scientific">Helicobacter pylori (strain HPAG1)</name>
    <dbReference type="NCBI Taxonomy" id="357544"/>
    <lineage>
        <taxon>Bacteria</taxon>
        <taxon>Pseudomonadati</taxon>
        <taxon>Campylobacterota</taxon>
        <taxon>Epsilonproteobacteria</taxon>
        <taxon>Campylobacterales</taxon>
        <taxon>Helicobacteraceae</taxon>
        <taxon>Helicobacter</taxon>
    </lineage>
</organism>
<dbReference type="EC" id="3.4.25.2" evidence="1"/>
<dbReference type="EMBL" id="CP000241">
    <property type="protein sequence ID" value="ABF84556.1"/>
    <property type="molecule type" value="Genomic_DNA"/>
</dbReference>
<dbReference type="RefSeq" id="WP_000461052.1">
    <property type="nucleotide sequence ID" value="NC_008086.1"/>
</dbReference>
<dbReference type="SMR" id="Q1CU16"/>
<dbReference type="KEGG" id="hpa:HPAG1_0489"/>
<dbReference type="HOGENOM" id="CLU_093872_1_1_7"/>
<dbReference type="GO" id="GO:0009376">
    <property type="term" value="C:HslUV protease complex"/>
    <property type="evidence" value="ECO:0007669"/>
    <property type="project" value="UniProtKB-UniRule"/>
</dbReference>
<dbReference type="GO" id="GO:0005839">
    <property type="term" value="C:proteasome core complex"/>
    <property type="evidence" value="ECO:0007669"/>
    <property type="project" value="InterPro"/>
</dbReference>
<dbReference type="GO" id="GO:0046872">
    <property type="term" value="F:metal ion binding"/>
    <property type="evidence" value="ECO:0007669"/>
    <property type="project" value="UniProtKB-KW"/>
</dbReference>
<dbReference type="GO" id="GO:0004298">
    <property type="term" value="F:threonine-type endopeptidase activity"/>
    <property type="evidence" value="ECO:0007669"/>
    <property type="project" value="UniProtKB-KW"/>
</dbReference>
<dbReference type="GO" id="GO:0051603">
    <property type="term" value="P:proteolysis involved in protein catabolic process"/>
    <property type="evidence" value="ECO:0007669"/>
    <property type="project" value="InterPro"/>
</dbReference>
<dbReference type="Gene3D" id="3.60.20.10">
    <property type="entry name" value="Glutamine Phosphoribosylpyrophosphate, subunit 1, domain 1"/>
    <property type="match status" value="1"/>
</dbReference>
<dbReference type="HAMAP" id="MF_00248">
    <property type="entry name" value="HslV"/>
    <property type="match status" value="1"/>
</dbReference>
<dbReference type="InterPro" id="IPR022281">
    <property type="entry name" value="ATP-dep_Prtase_HsIV_su"/>
</dbReference>
<dbReference type="InterPro" id="IPR029055">
    <property type="entry name" value="Ntn_hydrolases_N"/>
</dbReference>
<dbReference type="InterPro" id="IPR001353">
    <property type="entry name" value="Proteasome_sua/b"/>
</dbReference>
<dbReference type="InterPro" id="IPR023333">
    <property type="entry name" value="Proteasome_suB-type"/>
</dbReference>
<dbReference type="NCBIfam" id="TIGR03692">
    <property type="entry name" value="ATP_dep_HslV"/>
    <property type="match status" value="1"/>
</dbReference>
<dbReference type="NCBIfam" id="NF003964">
    <property type="entry name" value="PRK05456.1"/>
    <property type="match status" value="1"/>
</dbReference>
<dbReference type="PANTHER" id="PTHR32194:SF0">
    <property type="entry name" value="ATP-DEPENDENT PROTEASE SUBUNIT HSLV"/>
    <property type="match status" value="1"/>
</dbReference>
<dbReference type="PANTHER" id="PTHR32194">
    <property type="entry name" value="METALLOPROTEASE TLDD"/>
    <property type="match status" value="1"/>
</dbReference>
<dbReference type="Pfam" id="PF00227">
    <property type="entry name" value="Proteasome"/>
    <property type="match status" value="1"/>
</dbReference>
<dbReference type="SUPFAM" id="SSF56235">
    <property type="entry name" value="N-terminal nucleophile aminohydrolases (Ntn hydrolases)"/>
    <property type="match status" value="1"/>
</dbReference>
<dbReference type="PROSITE" id="PS51476">
    <property type="entry name" value="PROTEASOME_BETA_2"/>
    <property type="match status" value="1"/>
</dbReference>
<feature type="chain" id="PRO_1000012620" description="ATP-dependent protease subunit HslV">
    <location>
        <begin position="1"/>
        <end position="180"/>
    </location>
</feature>
<feature type="active site" evidence="1">
    <location>
        <position position="5"/>
    </location>
</feature>
<feature type="binding site" evidence="1">
    <location>
        <position position="165"/>
    </location>
    <ligand>
        <name>Na(+)</name>
        <dbReference type="ChEBI" id="CHEBI:29101"/>
    </ligand>
</feature>
<feature type="binding site" evidence="1">
    <location>
        <position position="168"/>
    </location>
    <ligand>
        <name>Na(+)</name>
        <dbReference type="ChEBI" id="CHEBI:29101"/>
    </ligand>
</feature>
<feature type="binding site" evidence="1">
    <location>
        <position position="171"/>
    </location>
    <ligand>
        <name>Na(+)</name>
        <dbReference type="ChEBI" id="CHEBI:29101"/>
    </ligand>
</feature>
<keyword id="KW-0021">Allosteric enzyme</keyword>
<keyword id="KW-0963">Cytoplasm</keyword>
<keyword id="KW-0378">Hydrolase</keyword>
<keyword id="KW-0479">Metal-binding</keyword>
<keyword id="KW-0645">Protease</keyword>
<keyword id="KW-0915">Sodium</keyword>
<keyword id="KW-0346">Stress response</keyword>
<keyword id="KW-0888">Threonine protease</keyword>
<protein>
    <recommendedName>
        <fullName evidence="1">ATP-dependent protease subunit HslV</fullName>
        <ecNumber evidence="1">3.4.25.2</ecNumber>
    </recommendedName>
</protein>
<accession>Q1CU16</accession>
<proteinExistence type="inferred from homology"/>
<comment type="function">
    <text evidence="1">Protease subunit of a proteasome-like degradation complex believed to be a general protein degrading machinery.</text>
</comment>
<comment type="catalytic activity">
    <reaction evidence="1">
        <text>ATP-dependent cleavage of peptide bonds with broad specificity.</text>
        <dbReference type="EC" id="3.4.25.2"/>
    </reaction>
</comment>
<comment type="activity regulation">
    <text evidence="1">Allosterically activated by HslU binding.</text>
</comment>
<comment type="subunit">
    <text evidence="1">A double ring-shaped homohexamer of HslV is capped on each side by a ring-shaped HslU homohexamer. The assembly of the HslU/HslV complex is dependent on binding of ATP.</text>
</comment>
<comment type="subcellular location">
    <subcellularLocation>
        <location evidence="1">Cytoplasm</location>
    </subcellularLocation>
</comment>
<comment type="similarity">
    <text evidence="1">Belongs to the peptidase T1B family. HslV subfamily.</text>
</comment>
<sequence>MFEATTILGYRGEMGGKKFALIGGDGQVTLGNCVVKANATKIRSLYHNQVLSGFAGSTADAFSLFDMFERILESKKGDLFKSVVDFSKEWRKDKYLRRLEAMMIVLNLDHIFILSGTGDVLEAEDNKIAAIGSGGNYALSAARALDHFAHLEPRKLVEESLKIAGDLCIYTNTNIKILEL</sequence>
<name>HSLV_HELPH</name>